<name>NF2L1_HUMAN</name>
<dbReference type="EMBL" id="L24123">
    <property type="status" value="NOT_ANNOTATED_CDS"/>
    <property type="molecule type" value="mRNA"/>
</dbReference>
<dbReference type="EMBL" id="X77366">
    <property type="protein sequence ID" value="CAA54555.1"/>
    <property type="molecule type" value="mRNA"/>
</dbReference>
<dbReference type="EMBL" id="CH471109">
    <property type="protein sequence ID" value="EAW94762.1"/>
    <property type="molecule type" value="Genomic_DNA"/>
</dbReference>
<dbReference type="EMBL" id="CH471109">
    <property type="protein sequence ID" value="EAW94763.1"/>
    <property type="molecule type" value="Genomic_DNA"/>
</dbReference>
<dbReference type="EMBL" id="CH471109">
    <property type="protein sequence ID" value="EAW94764.1"/>
    <property type="molecule type" value="Genomic_DNA"/>
</dbReference>
<dbReference type="EMBL" id="CH471109">
    <property type="protein sequence ID" value="EAW94765.1"/>
    <property type="molecule type" value="Genomic_DNA"/>
</dbReference>
<dbReference type="EMBL" id="CH471109">
    <property type="protein sequence ID" value="EAW94766.1"/>
    <property type="molecule type" value="Genomic_DNA"/>
</dbReference>
<dbReference type="EMBL" id="CH471109">
    <property type="protein sequence ID" value="EAW94767.1"/>
    <property type="molecule type" value="Genomic_DNA"/>
</dbReference>
<dbReference type="EMBL" id="BC010623">
    <property type="protein sequence ID" value="AAH10623.1"/>
    <property type="molecule type" value="mRNA"/>
</dbReference>
<dbReference type="EMBL" id="U08853">
    <property type="protein sequence ID" value="AAA20466.1"/>
    <property type="molecule type" value="mRNA"/>
</dbReference>
<dbReference type="CCDS" id="CCDS11524.1">
    <molecule id="Q14494-1"/>
</dbReference>
<dbReference type="CCDS" id="CCDS82150.1">
    <molecule id="Q14494-2"/>
</dbReference>
<dbReference type="PIR" id="A49672">
    <property type="entry name" value="A49672"/>
</dbReference>
<dbReference type="PIR" id="A55004">
    <property type="entry name" value="A55004"/>
</dbReference>
<dbReference type="RefSeq" id="NP_001317191.1">
    <molecule id="Q14494-2"/>
    <property type="nucleotide sequence ID" value="NM_001330262.2"/>
</dbReference>
<dbReference type="RefSeq" id="NP_003195.1">
    <molecule id="Q14494-1"/>
    <property type="nucleotide sequence ID" value="NM_003204.3"/>
</dbReference>
<dbReference type="RefSeq" id="XP_005257467.1">
    <molecule id="Q14494-1"/>
    <property type="nucleotide sequence ID" value="XM_005257410.5"/>
</dbReference>
<dbReference type="RefSeq" id="XP_005257469.1">
    <molecule id="Q14494-2"/>
    <property type="nucleotide sequence ID" value="XM_005257412.5"/>
</dbReference>
<dbReference type="RefSeq" id="XP_054172242.1">
    <molecule id="Q14494-1"/>
    <property type="nucleotide sequence ID" value="XM_054316267.1"/>
</dbReference>
<dbReference type="RefSeq" id="XP_054172244.1">
    <molecule id="Q14494-2"/>
    <property type="nucleotide sequence ID" value="XM_054316269.1"/>
</dbReference>
<dbReference type="SMR" id="Q14494"/>
<dbReference type="BioGRID" id="110851">
    <property type="interactions" value="42"/>
</dbReference>
<dbReference type="ComplexPortal" id="CPX-2473">
    <property type="entry name" value="bZIP transcription factor complex, BACH2-NFE2L1"/>
</dbReference>
<dbReference type="ComplexPortal" id="CPX-6569">
    <property type="entry name" value="bZIP transcription factor complex, ATF4-NFE2L1"/>
</dbReference>
<dbReference type="ComplexPortal" id="CPX-6790">
    <property type="entry name" value="bZIP transcription factor complex, ATF7-NFE2L1"/>
</dbReference>
<dbReference type="ComplexPortal" id="CPX-7015">
    <property type="entry name" value="bZIP transcription factor complex, BATF-NFE2L1"/>
</dbReference>
<dbReference type="CORUM" id="Q14494"/>
<dbReference type="ELM" id="Q14494"/>
<dbReference type="FunCoup" id="Q14494">
    <property type="interactions" value="5005"/>
</dbReference>
<dbReference type="IntAct" id="Q14494">
    <property type="interactions" value="32"/>
</dbReference>
<dbReference type="MINT" id="Q14494"/>
<dbReference type="STRING" id="9606.ENSP00000354855"/>
<dbReference type="DrugBank" id="DB04147">
    <property type="generic name" value="Dodecyldimethylamine N-oxide"/>
</dbReference>
<dbReference type="GlyCosmos" id="Q14494">
    <property type="glycosylation" value="4 sites, No reported glycans"/>
</dbReference>
<dbReference type="GlyGen" id="Q14494">
    <property type="glycosylation" value="5 sites, 1 O-linked glycan (1 site)"/>
</dbReference>
<dbReference type="iPTMnet" id="Q14494"/>
<dbReference type="PhosphoSitePlus" id="Q14494"/>
<dbReference type="BioMuta" id="NFE2L1"/>
<dbReference type="DMDM" id="3183180"/>
<dbReference type="jPOST" id="Q14494"/>
<dbReference type="MassIVE" id="Q14494"/>
<dbReference type="PaxDb" id="9606-ENSP00000354855"/>
<dbReference type="PeptideAtlas" id="Q14494"/>
<dbReference type="ProteomicsDB" id="60003">
    <molecule id="Q14494-1"/>
</dbReference>
<dbReference type="ProteomicsDB" id="60004">
    <molecule id="Q14494-2"/>
</dbReference>
<dbReference type="Antibodypedia" id="30234">
    <property type="antibodies" value="243 antibodies from 32 providers"/>
</dbReference>
<dbReference type="DNASU" id="4779"/>
<dbReference type="Ensembl" id="ENST00000357480.9">
    <molecule id="Q14494-2"/>
    <property type="protein sequence ID" value="ENSP00000350072.5"/>
    <property type="gene ID" value="ENSG00000082641.16"/>
</dbReference>
<dbReference type="Ensembl" id="ENST00000362042.8">
    <molecule id="Q14494-1"/>
    <property type="protein sequence ID" value="ENSP00000354855.3"/>
    <property type="gene ID" value="ENSG00000082641.16"/>
</dbReference>
<dbReference type="Ensembl" id="ENST00000585291.5">
    <molecule id="Q14494-2"/>
    <property type="protein sequence ID" value="ENSP00000461960.1"/>
    <property type="gene ID" value="ENSG00000082641.16"/>
</dbReference>
<dbReference type="GeneID" id="4779"/>
<dbReference type="KEGG" id="hsa:4779"/>
<dbReference type="MANE-Select" id="ENST00000362042.8">
    <property type="protein sequence ID" value="ENSP00000354855.3"/>
    <property type="RefSeq nucleotide sequence ID" value="NM_003204.3"/>
    <property type="RefSeq protein sequence ID" value="NP_003195.1"/>
</dbReference>
<dbReference type="UCSC" id="uc002imz.5">
    <molecule id="Q14494-1"/>
    <property type="organism name" value="human"/>
</dbReference>
<dbReference type="AGR" id="HGNC:7781"/>
<dbReference type="CTD" id="4779"/>
<dbReference type="DisGeNET" id="4779"/>
<dbReference type="GeneCards" id="NFE2L1"/>
<dbReference type="HGNC" id="HGNC:7781">
    <property type="gene designation" value="NFE2L1"/>
</dbReference>
<dbReference type="HPA" id="ENSG00000082641">
    <property type="expression patterns" value="Tissue enhanced (skeletal muscle, tongue)"/>
</dbReference>
<dbReference type="MIM" id="163260">
    <property type="type" value="gene"/>
</dbReference>
<dbReference type="neXtProt" id="NX_Q14494"/>
<dbReference type="OpenTargets" id="ENSG00000082641"/>
<dbReference type="PharmGKB" id="PA31587"/>
<dbReference type="VEuPathDB" id="HostDB:ENSG00000082641"/>
<dbReference type="eggNOG" id="KOG3863">
    <property type="taxonomic scope" value="Eukaryota"/>
</dbReference>
<dbReference type="GeneTree" id="ENSGT00950000182892"/>
<dbReference type="HOGENOM" id="CLU_024173_1_0_1"/>
<dbReference type="InParanoid" id="Q14494"/>
<dbReference type="OMA" id="PEGNQEH"/>
<dbReference type="OrthoDB" id="7458135at2759"/>
<dbReference type="PAN-GO" id="Q14494">
    <property type="GO annotations" value="4 GO annotations based on evolutionary models"/>
</dbReference>
<dbReference type="PhylomeDB" id="Q14494"/>
<dbReference type="TreeFam" id="TF326681"/>
<dbReference type="PathwayCommons" id="Q14494"/>
<dbReference type="SignaLink" id="Q14494"/>
<dbReference type="SIGNOR" id="Q14494"/>
<dbReference type="BioGRID-ORCS" id="4779">
    <property type="hits" value="47 hits in 1173 CRISPR screens"/>
</dbReference>
<dbReference type="ChiTaRS" id="NFE2L1">
    <property type="organism name" value="human"/>
</dbReference>
<dbReference type="GeneWiki" id="NFE2L1"/>
<dbReference type="GenomeRNAi" id="4779"/>
<dbReference type="Pharos" id="Q14494">
    <property type="development level" value="Tbio"/>
</dbReference>
<dbReference type="PRO" id="PR:Q14494"/>
<dbReference type="Proteomes" id="UP000005640">
    <property type="component" value="Chromosome 17"/>
</dbReference>
<dbReference type="RNAct" id="Q14494">
    <property type="molecule type" value="protein"/>
</dbReference>
<dbReference type="Bgee" id="ENSG00000082641">
    <property type="expression patterns" value="Expressed in gluteal muscle and 214 other cell types or tissues"/>
</dbReference>
<dbReference type="ExpressionAtlas" id="Q14494">
    <property type="expression patterns" value="baseline and differential"/>
</dbReference>
<dbReference type="GO" id="GO:0000785">
    <property type="term" value="C:chromatin"/>
    <property type="evidence" value="ECO:0000247"/>
    <property type="project" value="NTNU_SB"/>
</dbReference>
<dbReference type="GO" id="GO:0005829">
    <property type="term" value="C:cytosol"/>
    <property type="evidence" value="ECO:0000314"/>
    <property type="project" value="HPA"/>
</dbReference>
<dbReference type="GO" id="GO:0005789">
    <property type="term" value="C:endoplasmic reticulum membrane"/>
    <property type="evidence" value="ECO:0007669"/>
    <property type="project" value="UniProtKB-SubCell"/>
</dbReference>
<dbReference type="GO" id="GO:0005654">
    <property type="term" value="C:nucleoplasm"/>
    <property type="evidence" value="ECO:0000314"/>
    <property type="project" value="HPA"/>
</dbReference>
<dbReference type="GO" id="GO:0005634">
    <property type="term" value="C:nucleus"/>
    <property type="evidence" value="ECO:0000318"/>
    <property type="project" value="GO_Central"/>
</dbReference>
<dbReference type="GO" id="GO:0032991">
    <property type="term" value="C:protein-containing complex"/>
    <property type="evidence" value="ECO:0007669"/>
    <property type="project" value="Ensembl"/>
</dbReference>
<dbReference type="GO" id="GO:0015485">
    <property type="term" value="F:cholesterol binding"/>
    <property type="evidence" value="ECO:0007669"/>
    <property type="project" value="Ensembl"/>
</dbReference>
<dbReference type="GO" id="GO:0001228">
    <property type="term" value="F:DNA-binding transcription activator activity, RNA polymerase II-specific"/>
    <property type="evidence" value="ECO:0007669"/>
    <property type="project" value="Ensembl"/>
</dbReference>
<dbReference type="GO" id="GO:0003700">
    <property type="term" value="F:DNA-binding transcription factor activity"/>
    <property type="evidence" value="ECO:0000304"/>
    <property type="project" value="GO_Central"/>
</dbReference>
<dbReference type="GO" id="GO:0000981">
    <property type="term" value="F:DNA-binding transcription factor activity, RNA polymerase II-specific"/>
    <property type="evidence" value="ECO:0000247"/>
    <property type="project" value="NTNU_SB"/>
</dbReference>
<dbReference type="GO" id="GO:0042802">
    <property type="term" value="F:identical protein binding"/>
    <property type="evidence" value="ECO:0000353"/>
    <property type="project" value="IntAct"/>
</dbReference>
<dbReference type="GO" id="GO:1990841">
    <property type="term" value="F:promoter-specific chromatin binding"/>
    <property type="evidence" value="ECO:0007669"/>
    <property type="project" value="Ensembl"/>
</dbReference>
<dbReference type="GO" id="GO:0019904">
    <property type="term" value="F:protein domain specific binding"/>
    <property type="evidence" value="ECO:0007669"/>
    <property type="project" value="Ensembl"/>
</dbReference>
<dbReference type="GO" id="GO:0044877">
    <property type="term" value="F:protein-containing complex binding"/>
    <property type="evidence" value="ECO:0007669"/>
    <property type="project" value="Ensembl"/>
</dbReference>
<dbReference type="GO" id="GO:0000978">
    <property type="term" value="F:RNA polymerase II cis-regulatory region sequence-specific DNA binding"/>
    <property type="evidence" value="ECO:0000318"/>
    <property type="project" value="GO_Central"/>
</dbReference>
<dbReference type="GO" id="GO:0009653">
    <property type="term" value="P:anatomical structure morphogenesis"/>
    <property type="evidence" value="ECO:0000304"/>
    <property type="project" value="ProtInc"/>
</dbReference>
<dbReference type="GO" id="GO:0019725">
    <property type="term" value="P:cellular homeostasis"/>
    <property type="evidence" value="ECO:0007669"/>
    <property type="project" value="Ensembl"/>
</dbReference>
<dbReference type="GO" id="GO:0071397">
    <property type="term" value="P:cellular response to cholesterol"/>
    <property type="evidence" value="ECO:0007669"/>
    <property type="project" value="Ensembl"/>
</dbReference>
<dbReference type="GO" id="GO:0070417">
    <property type="term" value="P:cellular response to cold"/>
    <property type="evidence" value="ECO:0007669"/>
    <property type="project" value="Ensembl"/>
</dbReference>
<dbReference type="GO" id="GO:0071280">
    <property type="term" value="P:cellular response to copper ion"/>
    <property type="evidence" value="ECO:0007669"/>
    <property type="project" value="Ensembl"/>
</dbReference>
<dbReference type="GO" id="GO:0042632">
    <property type="term" value="P:cholesterol homeostasis"/>
    <property type="evidence" value="ECO:0007669"/>
    <property type="project" value="Ensembl"/>
</dbReference>
<dbReference type="GO" id="GO:0008203">
    <property type="term" value="P:cholesterol metabolic process"/>
    <property type="evidence" value="ECO:0007669"/>
    <property type="project" value="UniProtKB-KW"/>
</dbReference>
<dbReference type="GO" id="GO:0042883">
    <property type="term" value="P:cysteine transport"/>
    <property type="evidence" value="ECO:0007669"/>
    <property type="project" value="Ensembl"/>
</dbReference>
<dbReference type="GO" id="GO:0030218">
    <property type="term" value="P:erythrocyte differentiation"/>
    <property type="evidence" value="ECO:0007669"/>
    <property type="project" value="Ensembl"/>
</dbReference>
<dbReference type="GO" id="GO:0006002">
    <property type="term" value="P:fructose 6-phosphate metabolic process"/>
    <property type="evidence" value="ECO:0007669"/>
    <property type="project" value="Ensembl"/>
</dbReference>
<dbReference type="GO" id="GO:0021781">
    <property type="term" value="P:glial cell fate commitment"/>
    <property type="evidence" value="ECO:0007669"/>
    <property type="project" value="Ensembl"/>
</dbReference>
<dbReference type="GO" id="GO:0051156">
    <property type="term" value="P:glucose 6-phosphate metabolic process"/>
    <property type="evidence" value="ECO:0007669"/>
    <property type="project" value="Ensembl"/>
</dbReference>
<dbReference type="GO" id="GO:0006749">
    <property type="term" value="P:glutathione metabolic process"/>
    <property type="evidence" value="ECO:0007669"/>
    <property type="project" value="Ensembl"/>
</dbReference>
<dbReference type="GO" id="GO:0006783">
    <property type="term" value="P:heme biosynthetic process"/>
    <property type="evidence" value="ECO:0000304"/>
    <property type="project" value="ProtInc"/>
</dbReference>
<dbReference type="GO" id="GO:0000209">
    <property type="term" value="P:protein polyubiquitination"/>
    <property type="evidence" value="ECO:0007669"/>
    <property type="project" value="Ensembl"/>
</dbReference>
<dbReference type="GO" id="GO:0019217">
    <property type="term" value="P:regulation of fatty acid metabolic process"/>
    <property type="evidence" value="ECO:0007669"/>
    <property type="project" value="Ensembl"/>
</dbReference>
<dbReference type="GO" id="GO:0010906">
    <property type="term" value="P:regulation of glucose metabolic process"/>
    <property type="evidence" value="ECO:0007669"/>
    <property type="project" value="Ensembl"/>
</dbReference>
<dbReference type="GO" id="GO:0050727">
    <property type="term" value="P:regulation of inflammatory response"/>
    <property type="evidence" value="ECO:0007669"/>
    <property type="project" value="Ensembl"/>
</dbReference>
<dbReference type="GO" id="GO:0007088">
    <property type="term" value="P:regulation of mitotic nuclear division"/>
    <property type="evidence" value="ECO:0007669"/>
    <property type="project" value="Ensembl"/>
</dbReference>
<dbReference type="GO" id="GO:1903353">
    <property type="term" value="P:regulation of nucleus organization"/>
    <property type="evidence" value="ECO:0007669"/>
    <property type="project" value="Ensembl"/>
</dbReference>
<dbReference type="GO" id="GO:0061136">
    <property type="term" value="P:regulation of proteasomal protein catabolic process"/>
    <property type="evidence" value="ECO:0007669"/>
    <property type="project" value="Ensembl"/>
</dbReference>
<dbReference type="GO" id="GO:1905897">
    <property type="term" value="P:regulation of response to endoplasmic reticulum stress"/>
    <property type="evidence" value="ECO:0007669"/>
    <property type="project" value="Ensembl"/>
</dbReference>
<dbReference type="GO" id="GO:0006357">
    <property type="term" value="P:regulation of transcription by RNA polymerase II"/>
    <property type="evidence" value="ECO:0000318"/>
    <property type="project" value="GO_Central"/>
</dbReference>
<dbReference type="GO" id="GO:0034976">
    <property type="term" value="P:response to endoplasmic reticulum stress"/>
    <property type="evidence" value="ECO:0007669"/>
    <property type="project" value="Ensembl"/>
</dbReference>
<dbReference type="GO" id="GO:0021522">
    <property type="term" value="P:spinal cord motor neuron differentiation"/>
    <property type="evidence" value="ECO:0007669"/>
    <property type="project" value="Ensembl"/>
</dbReference>
<dbReference type="CDD" id="cd14720">
    <property type="entry name" value="bZIP_NFE2-like"/>
    <property type="match status" value="1"/>
</dbReference>
<dbReference type="FunFam" id="1.10.880.10:FF:000001">
    <property type="entry name" value="Nuclear factor erythroid 2-related factor 2"/>
    <property type="match status" value="1"/>
</dbReference>
<dbReference type="Gene3D" id="1.10.880.10">
    <property type="entry name" value="Transcription factor, Skn-1-like, DNA-binding domain"/>
    <property type="match status" value="1"/>
</dbReference>
<dbReference type="InterPro" id="IPR004827">
    <property type="entry name" value="bZIP"/>
</dbReference>
<dbReference type="InterPro" id="IPR004826">
    <property type="entry name" value="bZIP_Maf"/>
</dbReference>
<dbReference type="InterPro" id="IPR047167">
    <property type="entry name" value="NFE2-like"/>
</dbReference>
<dbReference type="InterPro" id="IPR008917">
    <property type="entry name" value="TF_DNA-bd_sf"/>
</dbReference>
<dbReference type="PANTHER" id="PTHR24411:SF31">
    <property type="entry name" value="ENDOPLASMIC RETICULUM MEMBRANE SENSOR NFE2L1"/>
    <property type="match status" value="1"/>
</dbReference>
<dbReference type="PANTHER" id="PTHR24411">
    <property type="entry name" value="NUCLEAR FACTOR ERYTHROID 2-RELATED FACTOR"/>
    <property type="match status" value="1"/>
</dbReference>
<dbReference type="Pfam" id="PF03131">
    <property type="entry name" value="bZIP_Maf"/>
    <property type="match status" value="1"/>
</dbReference>
<dbReference type="SMART" id="SM00338">
    <property type="entry name" value="BRLZ"/>
    <property type="match status" value="1"/>
</dbReference>
<dbReference type="SUPFAM" id="SSF47454">
    <property type="entry name" value="A DNA-binding domain in eukaryotic transcription factors"/>
    <property type="match status" value="1"/>
</dbReference>
<dbReference type="PROSITE" id="PS50217">
    <property type="entry name" value="BZIP"/>
    <property type="match status" value="1"/>
</dbReference>
<dbReference type="PROSITE" id="PS00036">
    <property type="entry name" value="BZIP_BASIC"/>
    <property type="match status" value="1"/>
</dbReference>
<feature type="chain" id="PRO_0000076447" description="Endoplasmic reticulum membrane sensor NFE2L1">
    <location>
        <begin position="1"/>
        <end position="772"/>
    </location>
</feature>
<feature type="chain" id="PRO_0000443103" description="Transcription factor NRF1" evidence="24">
    <location>
        <begin position="104"/>
        <end position="772"/>
    </location>
</feature>
<feature type="transmembrane region" description="Helical; Signal-anchor for type II membrane protein" evidence="2">
    <location>
        <begin position="7"/>
        <end position="24"/>
    </location>
</feature>
<feature type="domain" description="bZIP" evidence="3">
    <location>
        <begin position="654"/>
        <end position="717"/>
    </location>
</feature>
<feature type="region of interest" description="Disordered" evidence="4">
    <location>
        <begin position="108"/>
        <end position="148"/>
    </location>
</feature>
<feature type="region of interest" description="Cholesterol recognition/amino acid consensus (CRAC) region" evidence="1">
    <location>
        <begin position="191"/>
        <end position="199"/>
    </location>
</feature>
<feature type="region of interest" description="CPD" evidence="1">
    <location>
        <begin position="379"/>
        <end position="383"/>
    </location>
</feature>
<feature type="region of interest" description="Disordered" evidence="4">
    <location>
        <begin position="470"/>
        <end position="532"/>
    </location>
</feature>
<feature type="region of interest" description="Disordered" evidence="4">
    <location>
        <begin position="582"/>
        <end position="613"/>
    </location>
</feature>
<feature type="region of interest" description="Basic motif" evidence="3">
    <location>
        <begin position="656"/>
        <end position="675"/>
    </location>
</feature>
<feature type="region of interest" description="Leucine-zipper" evidence="3">
    <location>
        <begin position="682"/>
        <end position="696"/>
    </location>
</feature>
<feature type="short sequence motif" description="Destruction motif" evidence="1">
    <location>
        <begin position="476"/>
        <end position="480"/>
    </location>
</feature>
<feature type="compositionally biased region" description="Polar residues" evidence="4">
    <location>
        <begin position="113"/>
        <end position="131"/>
    </location>
</feature>
<feature type="compositionally biased region" description="Low complexity" evidence="4">
    <location>
        <begin position="476"/>
        <end position="523"/>
    </location>
</feature>
<feature type="compositionally biased region" description="Basic and acidic residues" evidence="4">
    <location>
        <begin position="598"/>
        <end position="613"/>
    </location>
</feature>
<feature type="site" description="Cleavage; by DDI2" evidence="8">
    <location>
        <begin position="103"/>
        <end position="104"/>
    </location>
</feature>
<feature type="modified residue" description="Phosphoserine; by CK2" evidence="1">
    <location>
        <position position="528"/>
    </location>
</feature>
<feature type="modified residue" description="Phosphoserine; by PKA" evidence="5">
    <location>
        <position position="599"/>
    </location>
</feature>
<feature type="glycosylation site" description="N-linked (GlcNAc...) asparagine" evidence="2">
    <location>
        <position position="348"/>
    </location>
</feature>
<feature type="glycosylation site" description="N-linked (GlcNAc...) asparagine" evidence="2">
    <location>
        <position position="360"/>
    </location>
</feature>
<feature type="glycosylation site" description="N-linked (GlcNAc...) asparagine" evidence="2">
    <location>
        <position position="412"/>
    </location>
</feature>
<feature type="glycosylation site" description="N-linked (GlcNAc...) asparagine" evidence="2">
    <location>
        <position position="423"/>
    </location>
</feature>
<feature type="splice variant" id="VSP_000579" description="In isoform 2." evidence="17 22">
    <location>
        <begin position="242"/>
        <end position="271"/>
    </location>
</feature>
<feature type="sequence variant" id="VAR_048440" description="In dbSNP:rs2229367.">
    <original>D</original>
    <variation>H</variation>
    <location>
        <position position="63"/>
    </location>
</feature>
<feature type="mutagenesis site" description="In m1; impaired protein cleavage." evidence="8">
    <original>NAWLVH</original>
    <variation>AAAAAA</variation>
    <location>
        <begin position="101"/>
        <end position="106"/>
    </location>
</feature>
<feature type="mutagenesis site" description="In m2; impaired protein cleavage." evidence="8">
    <original>NAW</original>
    <variation>AAA</variation>
    <location>
        <begin position="101"/>
        <end position="103"/>
    </location>
</feature>
<feature type="mutagenesis site" description="In m5; impaired protein cleavage." evidence="8">
    <original>WL</original>
    <variation>AA</variation>
    <location>
        <begin position="103"/>
        <end position="104"/>
    </location>
</feature>
<feature type="mutagenesis site" description="In m3; impaired protein cleavage." evidence="8">
    <original>W</original>
    <variation>A</variation>
    <location>
        <position position="103"/>
    </location>
</feature>
<feature type="mutagenesis site" description="In m6; Slightly impaired protein cleavage." evidence="8">
    <original>LVH</original>
    <variation>AAA</variation>
    <location>
        <begin position="104"/>
        <end position="106"/>
    </location>
</feature>
<feature type="mutagenesis site" description="In m4; Slightly impaired protein cleavage." evidence="8">
    <original>L</original>
    <variation>A</variation>
    <location>
        <position position="104"/>
    </location>
</feature>
<feature type="mutagenesis site" description="Impaired interaction with CEBPB." evidence="5">
    <original>S</original>
    <variation>A</variation>
    <location>
        <position position="599"/>
    </location>
</feature>
<organism>
    <name type="scientific">Homo sapiens</name>
    <name type="common">Human</name>
    <dbReference type="NCBI Taxonomy" id="9606"/>
    <lineage>
        <taxon>Eukaryota</taxon>
        <taxon>Metazoa</taxon>
        <taxon>Chordata</taxon>
        <taxon>Craniata</taxon>
        <taxon>Vertebrata</taxon>
        <taxon>Euteleostomi</taxon>
        <taxon>Mammalia</taxon>
        <taxon>Eutheria</taxon>
        <taxon>Euarchontoglires</taxon>
        <taxon>Primates</taxon>
        <taxon>Haplorrhini</taxon>
        <taxon>Catarrhini</taxon>
        <taxon>Hominidae</taxon>
        <taxon>Homo</taxon>
    </lineage>
</organism>
<comment type="function">
    <molecule>Endoplasmic reticulum membrane sensor NFE2L1</molecule>
    <text evidence="1 7 8">Endoplasmic reticulum membrane sensor that translocates into the nucleus in response to various stresses to act as a transcription factor (PubMed:20932482, PubMed:24448410). Constitutes a precursor of the transcription factor NRF1 (By similarity). Able to detect various cellular stresses, such as cholesterol excess, oxidative stress or proteasome inhibition (PubMed:20932482). In response to stress, it is released from the endoplasmic reticulum membrane following cleavage by the protease DDI2 and translocates into the nucleus to form the transcription factor NRF1 (By similarity). Acts as a key sensor of cholesterol excess: in excess cholesterol conditions, the endoplasmic reticulum membrane form of the protein directly binds cholesterol via its CRAC motif, preventing cleavage and release of the transcription factor NRF1, thereby allowing expression of genes promoting cholesterol removal, such as CD36 (By similarity). Involved in proteasome homeostasis: in response to proteasome inhibition, it is released from the endoplasmic reticulum membrane, translocates to the nucleus and activates expression of genes encoding proteasome subunits (PubMed:20932482).</text>
</comment>
<comment type="function">
    <molecule>Transcription factor NRF1</molecule>
    <text evidence="1 5 7 15 16">CNC-type bZIP family transcription factor that translocates to the nucleus and regulates expression of target genes in response to various stresses (PubMed:8932385, PubMed:9421508). Heterodimerizes with small-Maf proteins (MAFF, MAFG or MAFK) and binds DNA motifs including the antioxidant response elements (AREs), which regulate expression of genes involved in oxidative stress response (PubMed:8932385, PubMed:9421508). Activates or represses expression of target genes, depending on the context (PubMed:8932385, PubMed:9421508). Plays a key role in cholesterol homeostasis by acting as a sensor of cholesterol excess: in low cholesterol conditions, translocates into the nucleus and represses expression of genes involved in defense against cholesterol excess, such as CD36 (By similarity). In excess cholesterol conditions, the endoplasmic reticulum membrane form of the protein directly binds cholesterol via its CRAC motif, preventing cleavage and release of the transcription factor NRF1, thereby allowing expression of genes promoting cholesterol removal (By similarity). Critical for redox balance in response to oxidative stress: acts by binding the AREs motifs on promoters and mediating activation of oxidative stress response genes, such as GCLC, GCLM, GSS, MT1 and MT2 (By similarity). Plays an essential role during fetal liver hematopoiesis: probably has a protective function against oxidative stress and is involved in lipid homeostasis in the liver (By similarity). Involved in proteasome homeostasis: in response to proteasome inhibition, mediates the 'bounce-back' of proteasome subunits by translocating into the nucleus and activating expression of genes encoding proteasome subunits (PubMed:20932482). Also involved in regulating glucose flux (By similarity). Together with CEBPB; represses expression of DSPP during odontoblast differentiation (PubMed:15308669). In response to ascorbic acid induction, activates expression of SP7/Osterix in osteoblasts.</text>
</comment>
<comment type="subunit">
    <text evidence="6">Interacts with KEAP1.</text>
</comment>
<comment type="subunit">
    <molecule>Endoplasmic reticulum membrane sensor NFE2L1</molecule>
    <text evidence="1 10">Interacts (via CPD region) with FBXW7; leading to its ubiquitination and degradation (By similarity). Interacts with SYVN1/HRD1; leading to its ubiquitination and degradation (By similarity). Interacts (when ubiquitinated) with DDI2; leading to its cleavage (PubMed:27528193).</text>
</comment>
<comment type="subunit">
    <molecule>Transcription factor NRF1</molecule>
    <text evidence="1 5 13 15 16">Interacts (via the bZIP domain) with small MAF protein (MAFF, MAFG or MAFK); required for binding to antioxidant response elements (AREs) on DNA (PubMed:8932385, PubMed:9421508). Interacts (via Destruction motif) with BTRC; leading to its ubiquitination and degradation (By similarity). Interacts with CEBPB; the heterodimer represses expression of DSPP during odontoblast differentiation (PubMed:15308669). Interacts with MOTS-c, a peptide produced by the mitochondrially encoded 12S rRNA MT-RNR1 (PubMed:29983246).</text>
</comment>
<comment type="interaction">
    <interactant intactId="EBI-2804436">
        <id>Q14494</id>
    </interactant>
    <interactant intactId="EBI-632965">
        <id>Q9NS37</id>
        <label>CREBZF</label>
    </interactant>
    <organismsDiffer>false</organismsDiffer>
    <experiments>3</experiments>
</comment>
<comment type="interaction">
    <interactant intactId="EBI-2804436">
        <id>Q14494</id>
    </interactant>
    <interactant intactId="EBI-751001">
        <id>Q14145</id>
        <label>KEAP1</label>
    </interactant>
    <organismsDiffer>false</organismsDiffer>
    <experiments>28</experiments>
</comment>
<comment type="interaction">
    <interactant intactId="EBI-2804436">
        <id>Q14494</id>
    </interactant>
    <interactant intactId="EBI-721128">
        <id>Q9ULX9</id>
        <label>MAFF</label>
    </interactant>
    <organismsDiffer>false</organismsDiffer>
    <experiments>4</experiments>
</comment>
<comment type="interaction">
    <interactant intactId="EBI-2804436">
        <id>Q14494</id>
    </interactant>
    <interactant intactId="EBI-713514">
        <id>O15525</id>
        <label>MAFG</label>
    </interactant>
    <organismsDiffer>false</organismsDiffer>
    <experiments>5</experiments>
</comment>
<comment type="interaction">
    <interactant intactId="EBI-2804436">
        <id>Q14494</id>
    </interactant>
    <interactant intactId="EBI-2804436">
        <id>Q14494</id>
        <label>NFE2L1</label>
    </interactant>
    <organismsDiffer>false</organismsDiffer>
    <experiments>2</experiments>
</comment>
<comment type="interaction">
    <interactant intactId="EBI-11745778">
        <id>Q14494-2</id>
    </interactant>
    <interactant intactId="EBI-713514">
        <id>O15525</id>
        <label>MAFG</label>
    </interactant>
    <organismsDiffer>false</organismsDiffer>
    <experiments>3</experiments>
</comment>
<comment type="subcellular location">
    <molecule>Endoplasmic reticulum membrane sensor NFE2L1</molecule>
    <subcellularLocation>
        <location evidence="6 8 9">Endoplasmic reticulum membrane</location>
        <topology evidence="7 8">Single-pass type II membrane protein</topology>
    </subcellularLocation>
    <subcellularLocation>
        <location evidence="6 8 9">Endoplasmic reticulum membrane</location>
        <topology evidence="7 8">Single-pass type III membrane protein</topology>
    </subcellularLocation>
    <text evidence="8">In normal conditions, probably has a single-pass type II membrane protein topology, with the DNA-binding domain facing the endoplasmic reticulum lumen (PubMed:24448410). Following cellular stress, it is rapidly and efficiently retrotranslocated to the cytosolic side of the membrane, a process dependent on p97/VCP, to have a single-pass type III membrane protein topology with the major part of the protein facing the cytosol (PubMed:24448410). Retrotranslocated proteins are normally rapidly degraded by the proteasome and active species do not accumulate (PubMed:24448410). However, retrotranslocated protein NFE2L1 escapes degradation and is cleaved at Leu-104 by DDI2, releasing the protein from the endoplasmic reticulum membrane and forming the transcription factor NRF1 that translocates into the nucleus (PubMed:24448410).</text>
</comment>
<comment type="subcellular location">
    <molecule>Transcription factor NRF1</molecule>
    <subcellularLocation>
        <location evidence="3 6 7 9 10">Nucleus</location>
    </subcellularLocation>
    <text evidence="8 10">Translocates into the nucleus following cleavage of Endoplasmic reticulum membrane sensor NFE2L1 by aspartyl protease DDI2.</text>
</comment>
<comment type="alternative products">
    <event type="alternative splicing"/>
    <isoform>
        <id>Q14494-1</id>
        <name>1</name>
        <name evidence="20">TCF11</name>
        <sequence type="displayed"/>
    </isoform>
    <isoform>
        <id>Q14494-2</id>
        <name>2</name>
        <sequence type="described" ref="VSP_000579"/>
    </isoform>
</comment>
<comment type="domain">
    <text evidence="1">The cholesterol recognition/amino acid consensus (CRAC) region directly binds cholesterol, as well as campesterol and 27-hydroxycholesterol. Has much lower affinity for epicholesterol.</text>
</comment>
<comment type="PTM">
    <molecule>Endoplasmic reticulum membrane sensor NFE2L1</molecule>
    <text evidence="8 10 11 12">Cleaved at Leu-104 by the aspartyl protease DDI2 following retrotranslocation, releasing the protein from the endoplasmic reticulum membrane and forming the transcription factor NRF1 that translocates into the nucleus (PubMed:24448410, PubMed:27528193, PubMed:27676297, PubMed:27676298). Ubiquitination is prerequisite for cleavage by aspartyl protease DDI2 (PubMed:27676298).</text>
</comment>
<comment type="PTM">
    <molecule>Endoplasmic reticulum membrane sensor NFE2L1</molecule>
    <text evidence="7 8 9 10">N-glycosylated in normal conditions, when it has a single-pass type II membrane protein topology, with the DNA-binding domain facing the endoplasmic reticulum lumen (PubMed:20932482, PubMed:24448410, PubMed:24998528, PubMed:27528193). Deglycosylated during retrotranslocation to the cytosolic side of the membrane, to have a single-pass type III membrane protein topology with the major part of the protein facing the cytosol (PubMed:20932482, PubMed:24448410, PubMed:24998528).</text>
</comment>
<comment type="PTM">
    <molecule>Endoplasmic reticulum membrane sensor NFE2L1</molecule>
    <text evidence="1 7 9 12">Ubiquitinated by the SCF(FBXW7) complex and SYVN1/HRD1, leading to its degradation by the proteasome (PubMed:20932482). Ubiquitinated during retrotranslocation to the cytosolic side of the membrane: ubiquitination does not lead to degradation and is required for processing by the aspartyl protease DDI2 and subsequent release from the endoplasmic reticulum membrane (PubMed:24998528, PubMed:27676298).</text>
</comment>
<comment type="PTM">
    <molecule>Transcription factor NRF1</molecule>
    <text evidence="1 5">Phosphorylation by CK2 at Ser-528 inhibits transcription factor activity, possibly by affecting DNA-binding activity (By similarity). Phosphorylation at Ser-599 is required for interaction with CEBPB (PubMed:15308669).</text>
</comment>
<comment type="PTM">
    <molecule>Transcription factor NRF1</molecule>
    <text evidence="1">Ubiquitinated by the SCF(BTRC) complex in the nucleus, leading to its degradation by the proteasome.</text>
</comment>
<comment type="similarity">
    <text evidence="23">Belongs to the bZIP family. CNC subfamily.</text>
</comment>
<comment type="caution">
    <molecule>Endoplasmic reticulum membrane sensor NFE2L1</molecule>
    <text evidence="9 11 12">According to a report, processing following retrotranslocation is dependent on the proteasome (PubMed:24998528). However, it was later shown that processing takes place in a proteasome-independent manner (PubMed:27676297, PubMed:27676298).</text>
</comment>
<comment type="caution">
    <molecule>Endoplasmic reticulum membrane sensor NFE2L1</molecule>
    <text evidence="1 8">Its topology is subject to discussion. According to some groups, it has a single-pass type II membrane protein in normal conditions and is retrotranslocated into a single-pass type III membrane protein in response to stress (PubMed:24448410). According to other reports, it is integrated into the endoplasmic reticulum membrane via multiple membrane-spanning alpha-helices.</text>
</comment>
<comment type="caution">
    <molecule>Transcription factor NRF1</molecule>
    <text evidence="1 14">Was initially thought to activate erythroid-specific, globin gene expression (PubMed:8036168). Knockout experiments in mouse however demonstrated that it is not the case.</text>
</comment>
<keyword id="KW-0010">Activator</keyword>
<keyword id="KW-0025">Alternative splicing</keyword>
<keyword id="KW-0153">Cholesterol metabolism</keyword>
<keyword id="KW-0238">DNA-binding</keyword>
<keyword id="KW-0256">Endoplasmic reticulum</keyword>
<keyword id="KW-0325">Glycoprotein</keyword>
<keyword id="KW-0443">Lipid metabolism</keyword>
<keyword id="KW-0446">Lipid-binding</keyword>
<keyword id="KW-0472">Membrane</keyword>
<keyword id="KW-0539">Nucleus</keyword>
<keyword id="KW-0597">Phosphoprotein</keyword>
<keyword id="KW-1267">Proteomics identification</keyword>
<keyword id="KW-1185">Reference proteome</keyword>
<keyword id="KW-0678">Repressor</keyword>
<keyword id="KW-0735">Signal-anchor</keyword>
<keyword id="KW-0753">Steroid metabolism</keyword>
<keyword id="KW-1207">Sterol metabolism</keyword>
<keyword id="KW-0804">Transcription</keyword>
<keyword id="KW-0805">Transcription regulation</keyword>
<keyword id="KW-0812">Transmembrane</keyword>
<keyword id="KW-1133">Transmembrane helix</keyword>
<keyword id="KW-0832">Ubl conjugation</keyword>
<protein>
    <recommendedName>
        <fullName evidence="23">Endoplasmic reticulum membrane sensor NFE2L1</fullName>
    </recommendedName>
    <alternativeName>
        <fullName evidence="21">Locus control region-factor 1</fullName>
        <shortName evidence="21">LCR-F1</shortName>
    </alternativeName>
    <alternativeName>
        <fullName>Nuclear factor erythroid 2-related factor 1</fullName>
        <shortName evidence="18 22">NF-E2-related factor 1</shortName>
        <shortName evidence="18 22">NFE2-related factor 1</shortName>
    </alternativeName>
    <alternativeName>
        <fullName>Nuclear factor, erythroid derived 2, like 1</fullName>
    </alternativeName>
    <alternativeName>
        <fullName evidence="19">Protein NRF1, p120 form</fullName>
    </alternativeName>
    <alternativeName>
        <fullName evidence="20">Transcription factor 11</fullName>
        <shortName evidence="20">TCF-11</shortName>
    </alternativeName>
    <component>
        <recommendedName>
            <fullName evidence="23">Transcription factor NRF1</fullName>
        </recommendedName>
        <alternativeName>
            <fullName evidence="19">Protein NRF1, p110 form</fullName>
        </alternativeName>
    </component>
</protein>
<reference key="1">
    <citation type="journal article" date="1993" name="Proc. Natl. Acad. Sci. U.S.A.">
        <title>Cloning of Nrf1, an NF-E2-related transcription factor, by genetic selection in yeast.</title>
        <authorList>
            <person name="Chan J.Y."/>
            <person name="Han X.-L."/>
            <person name="Kan Y.W."/>
        </authorList>
    </citation>
    <scope>NUCLEOTIDE SEQUENCE [MRNA] (ISOFORM 2)</scope>
</reference>
<reference key="2">
    <citation type="journal article" date="1994" name="Genomics">
        <title>Molecular cloning of a putative novel human bZIP transcription factor on chromosome 17q22.</title>
        <authorList>
            <person name="Luna L."/>
            <person name="Johnsen O."/>
            <person name="Skartlien A.H."/>
            <person name="Pedeutour F."/>
            <person name="Turc-Carel C."/>
            <person name="Prydz H."/>
            <person name="Kolstoe A.-B."/>
        </authorList>
    </citation>
    <scope>NUCLEOTIDE SEQUENCE [MRNA] (ISOFORM 1)</scope>
</reference>
<reference key="3">
    <citation type="submission" date="2005-09" db="EMBL/GenBank/DDBJ databases">
        <authorList>
            <person name="Mural R.J."/>
            <person name="Istrail S."/>
            <person name="Sutton G.G."/>
            <person name="Florea L."/>
            <person name="Halpern A.L."/>
            <person name="Mobarry C.M."/>
            <person name="Lippert R."/>
            <person name="Walenz B."/>
            <person name="Shatkay H."/>
            <person name="Dew I."/>
            <person name="Miller J.R."/>
            <person name="Flanigan M.J."/>
            <person name="Edwards N.J."/>
            <person name="Bolanos R."/>
            <person name="Fasulo D."/>
            <person name="Halldorsson B.V."/>
            <person name="Hannenhalli S."/>
            <person name="Turner R."/>
            <person name="Yooseph S."/>
            <person name="Lu F."/>
            <person name="Nusskern D.R."/>
            <person name="Shue B.C."/>
            <person name="Zheng X.H."/>
            <person name="Zhong F."/>
            <person name="Delcher A.L."/>
            <person name="Huson D.H."/>
            <person name="Kravitz S.A."/>
            <person name="Mouchard L."/>
            <person name="Reinert K."/>
            <person name="Remington K.A."/>
            <person name="Clark A.G."/>
            <person name="Waterman M.S."/>
            <person name="Eichler E.E."/>
            <person name="Adams M.D."/>
            <person name="Hunkapiller M.W."/>
            <person name="Myers E.W."/>
            <person name="Venter J.C."/>
        </authorList>
    </citation>
    <scope>NUCLEOTIDE SEQUENCE [LARGE SCALE GENOMIC DNA]</scope>
</reference>
<reference key="4">
    <citation type="journal article" date="2004" name="Genome Res.">
        <title>The status, quality, and expansion of the NIH full-length cDNA project: the Mammalian Gene Collection (MGC).</title>
        <authorList>
            <consortium name="The MGC Project Team"/>
        </authorList>
    </citation>
    <scope>NUCLEOTIDE SEQUENCE [LARGE SCALE MRNA] (ISOFORM 2)</scope>
    <source>
        <tissue>Eye</tissue>
    </source>
</reference>
<reference key="5">
    <citation type="journal article" date="1994" name="Nucleic Acids Res.">
        <title>Cloning and functional characterization of LCR-F1: a bZIP transcription factor that activates erythroid-specific, human globin gene expression.</title>
        <authorList>
            <person name="Caterina J.J."/>
            <person name="Donze D."/>
            <person name="Sun C.W."/>
            <person name="Ciavatta D.J."/>
            <person name="Townes T.M."/>
        </authorList>
    </citation>
    <scope>NUCLEOTIDE SEQUENCE [MRNA] OF 326-772</scope>
</reference>
<reference key="6">
    <citation type="journal article" date="1996" name="Nucleic Acids Res.">
        <title>Small Maf proteins interact with the human transcription factor TCF11/Nrf1/LCR-F1.</title>
        <authorList>
            <person name="Johnsen O."/>
            <person name="Skammelsrud N."/>
            <person name="Luna L."/>
            <person name="Nishizawa M."/>
            <person name="Prydz H."/>
            <person name="Kolstoe A.B."/>
        </authorList>
    </citation>
    <scope>FUNCTION</scope>
    <scope>DNA-BINDING</scope>
    <scope>INTERACTION WITH MAFF; MAFG AND MAFK</scope>
</reference>
<reference key="7">
    <citation type="journal article" date="1998" name="Nucleic Acids Res.">
        <title>Interaction of the CNC-bZIP factor TCF11/LCR-F1/Nrf1 with MafG: binding-site selection and regulation of transcription.</title>
        <authorList>
            <person name="Johnsen O."/>
            <person name="Murphy P."/>
            <person name="Prydz H."/>
            <person name="Kolsto A.B."/>
        </authorList>
    </citation>
    <scope>FUNCTION</scope>
    <scope>DNA-BINDING</scope>
    <scope>INTERACTION WITH MAFG</scope>
</reference>
<reference key="8">
    <citation type="journal article" date="2004" name="J. Biol. Chem.">
        <title>The CCAAT enhancer-binding protein (C/EBP)beta and Nrf1 interact to regulate dentin sialophosphoprotein (DSPP) gene expression during odontoblast differentiation.</title>
        <authorList>
            <person name="Narayanan K."/>
            <person name="Ramachandran A."/>
            <person name="Peterson M.C."/>
            <person name="Hao J."/>
            <person name="Kolstoe A.B."/>
            <person name="Friedman A.D."/>
            <person name="George A."/>
        </authorList>
    </citation>
    <scope>FUNCTION</scope>
    <scope>INTERACTION WITH CEBPB</scope>
    <scope>PHOSPHORYLATION AT SER-599</scope>
</reference>
<reference key="9">
    <citation type="journal article" date="2006" name="J. Biol. Chem.">
        <title>Nrf1 is targeted to the endoplasmic reticulum membrane by an N-terminal transmembrane domain. Inhibition of nuclear translocation and transacting function.</title>
        <authorList>
            <person name="Wang W."/>
            <person name="Chan J.Y."/>
        </authorList>
    </citation>
    <scope>FUNCTION</scope>
    <scope>SUBCELLULAR LOCATION</scope>
    <scope>INTERACTION WITH KEAP1</scope>
</reference>
<reference key="10">
    <citation type="journal article" date="2010" name="Mol. Cell">
        <title>Proteasomal degradation is transcriptionally controlled by TCF11 via an ERAD-dependent feedback loop.</title>
        <authorList>
            <person name="Steffen J."/>
            <person name="Seeger M."/>
            <person name="Koch A."/>
            <person name="Krueger E."/>
        </authorList>
    </citation>
    <scope>FUNCTION</scope>
    <scope>SUBCELLULAR LOCATION</scope>
    <scope>GLYCOSYLATION</scope>
</reference>
<reference key="11">
    <citation type="journal article" date="2014" name="Curr. Biol.">
        <title>Proteasome-mediated processing of Nrf1 is essential for coordinate induction of all proteasome subunits and p97.</title>
        <authorList>
            <person name="Sha Z."/>
            <person name="Goldberg A.L."/>
        </authorList>
    </citation>
    <scope>SUBCELLULAR LOCATION</scope>
    <scope>PROTEOLYTIC PROCESSING</scope>
    <scope>GLYCOSYLATION</scope>
    <scope>UBIQUITINATION</scope>
</reference>
<reference key="12">
    <citation type="journal article" date="2014" name="Elife">
        <title>p97-dependent retrotranslocation and proteolytic processing govern formation of active Nrf1 upon proteasome inhibition.</title>
        <authorList>
            <person name="Radhakrishnan S.K."/>
            <person name="den Besten W."/>
            <person name="Deshaies R.J."/>
        </authorList>
    </citation>
    <scope>FUNCTION</scope>
    <scope>SUBCELLULAR LOCATION</scope>
    <scope>TOPOLOGY</scope>
    <scope>GLYCOSYLATION</scope>
    <scope>PROTEOLYTIC PROCESSING</scope>
    <scope>MUTAGENESIS OF 101-ASN--HIS-106; 101-ASN--TRP-103; TRP-103; 104-LEU--HIS-106 AND LEU-104</scope>
</reference>
<reference key="13">
    <citation type="journal article" date="2016" name="Curr. Biol.">
        <title>Nrf1 can be processed and activated in a proteasome-independent manner.</title>
        <authorList>
            <person name="Vangala J.R."/>
            <person name="Sotzny F."/>
            <person name="Krueger E."/>
            <person name="Deshaies R.J."/>
            <person name="Radhakrishnan S.K."/>
        </authorList>
    </citation>
    <scope>PROTEOLYTIC PROCESSING</scope>
</reference>
<reference key="14">
    <citation type="journal article" date="2016" name="Curr. Biol.">
        <title>Reply to Vangala et al.: Complete inhibition of the proteasome reduces new proteasome production by causing Nrf1 aggregation.</title>
        <authorList>
            <person name="Sha Z."/>
            <person name="Goldberg A.L."/>
        </authorList>
    </citation>
    <scope>PROTEOLYTIC PROCESSING</scope>
    <scope>UBIQUITINATION</scope>
</reference>
<reference key="15">
    <citation type="journal article" date="2016" name="Elife">
        <title>The aspartyl protease DDI2 activates Nrf1 to compensate for proteasome dysfunction.</title>
        <authorList>
            <person name="Koizumi S."/>
            <person name="Irie T."/>
            <person name="Hirayama S."/>
            <person name="Sakurai Y."/>
            <person name="Yashiroda H."/>
            <person name="Naguro I."/>
            <person name="Ichijo H."/>
            <person name="Hamazaki J."/>
            <person name="Murata S."/>
        </authorList>
    </citation>
    <scope>PROTEOLYTIC PROCESSING</scope>
    <scope>SUBCELLULAR LOCATION</scope>
    <scope>GLYCOSYLATION</scope>
</reference>
<reference key="16">
    <citation type="journal article" date="2016" name="Gene">
        <title>Nuclear factor erythroid-2 like 1 (NFE2L1): structure, function and regulation.</title>
        <authorList>
            <person name="Kim H.M."/>
            <person name="Han J.W."/>
            <person name="Chan J.Y."/>
        </authorList>
    </citation>
    <scope>REVIEW</scope>
</reference>
<reference key="17">
    <citation type="journal article" date="2018" name="Cell Metab.">
        <title>The Mitochondrial-Encoded Peptide MOTS-c Translocates to the Nucleus to Regulate Nuclear Gene Expression in Response to Metabolic Stress.</title>
        <authorList>
            <person name="Kim K.H."/>
            <person name="Son J.M."/>
            <person name="Benayoun B.A."/>
            <person name="Lee C."/>
        </authorList>
    </citation>
    <scope>INTERACTION WITH MOTS-C</scope>
</reference>
<evidence type="ECO:0000250" key="1">
    <source>
        <dbReference type="UniProtKB" id="Q61985"/>
    </source>
</evidence>
<evidence type="ECO:0000255" key="2"/>
<evidence type="ECO:0000255" key="3">
    <source>
        <dbReference type="PROSITE-ProRule" id="PRU00978"/>
    </source>
</evidence>
<evidence type="ECO:0000256" key="4">
    <source>
        <dbReference type="SAM" id="MobiDB-lite"/>
    </source>
</evidence>
<evidence type="ECO:0000269" key="5">
    <source>
    </source>
</evidence>
<evidence type="ECO:0000269" key="6">
    <source>
    </source>
</evidence>
<evidence type="ECO:0000269" key="7">
    <source>
    </source>
</evidence>
<evidence type="ECO:0000269" key="8">
    <source>
    </source>
</evidence>
<evidence type="ECO:0000269" key="9">
    <source>
    </source>
</evidence>
<evidence type="ECO:0000269" key="10">
    <source>
    </source>
</evidence>
<evidence type="ECO:0000269" key="11">
    <source>
    </source>
</evidence>
<evidence type="ECO:0000269" key="12">
    <source>
    </source>
</evidence>
<evidence type="ECO:0000269" key="13">
    <source>
    </source>
</evidence>
<evidence type="ECO:0000269" key="14">
    <source>
    </source>
</evidence>
<evidence type="ECO:0000269" key="15">
    <source>
    </source>
</evidence>
<evidence type="ECO:0000269" key="16">
    <source>
    </source>
</evidence>
<evidence type="ECO:0000303" key="17">
    <source>
    </source>
</evidence>
<evidence type="ECO:0000303" key="18">
    <source>
    </source>
</evidence>
<evidence type="ECO:0000303" key="19">
    <source>
    </source>
</evidence>
<evidence type="ECO:0000303" key="20">
    <source>
    </source>
</evidence>
<evidence type="ECO:0000303" key="21">
    <source>
    </source>
</evidence>
<evidence type="ECO:0000303" key="22">
    <source>
    </source>
</evidence>
<evidence type="ECO:0000305" key="23"/>
<evidence type="ECO:0000305" key="24">
    <source>
    </source>
</evidence>
<proteinExistence type="evidence at protein level"/>
<sequence>MLSLKKYLTEGLLQFTILLSLIGVRVDVDTYLTSQLPPLREIILGPSSAYTQTQFHNLRNTLDGYGIHPKSIDLDNYFTARRLLSQVRALDRFQVPTTEVNAWLVHRDPEGSVSGSQPNSGLALESSSGLQDVTGPDNGVRESETEQGFGEDLEDLGAVAPPVSGDLTKEDIDLIDILWRQDIDLGAGREVFDYSHRQKEQDVEKELRDGGEQDTWAGEGAEALARNLLVDGETGESFPAQVPSGEDQTALSLEECLRLLEATCPFGENAEFPADISSITEAVPSESEPPALQNNLLSPLLTGTESPFDLEQQWQDLMSIMEMQAMEVNTSASEILYSAPPGDPLSTNYSLAPNTPINQNVSLHQASLGGCSQDFLLFSPEVESLPVASSSTLLPLAPSNSTSLNSTFGSTNLTGLFFPPQLNGTANDTAGPELPDPLGGLLDEAMLDEISLMDLAIEEGFNPVQASQLEEEFDSDSGLSLDSSHSPSSLSSSEGSSSSSSSSSSSSSSASSSASSSFSEEGAVGYSSDSETLDLEEAEGAVGYQPEYSKFCRMSYQDPAQLSCLPYLEHVGHNHTYNMAPSALDSADLPPPSALKKGSKEKQADFLDKQMSRDEHRARAMKIPFTNDKIINLPVEEFNELLSKYQLSEAQLSLIRDIRRRGKNKMAAQNCRKRKLDTILNLERDVEDLQRDKARLLREKVEFLRSLRQMKQKVQSLYQEVFGRLRDENGRPYSPSQYALQYAGDGSVLLIPRTMADQQARRQERKPKDRRK</sequence>
<accession>Q14494</accession>
<accession>D3DTU3</accession>
<accession>D3DTU5</accession>
<accession>Q12877</accession>
<accession>Q96FN6</accession>
<gene>
    <name type="primary">NFE2L1</name>
    <name type="synonym">HBZ17</name>
    <name evidence="18 22" type="synonym">NRF1</name>
    <name evidence="20" type="synonym">TCF11</name>
</gene>